<keyword id="KW-0028">Amino-acid biosynthesis</keyword>
<keyword id="KW-0150">Chloroplast</keyword>
<keyword id="KW-0903">Direct protein sequencing</keyword>
<keyword id="KW-0486">Methionine biosynthesis</keyword>
<keyword id="KW-0934">Plastid</keyword>
<keyword id="KW-0663">Pyridoxal phosphate</keyword>
<keyword id="KW-1185">Reference proteome</keyword>
<keyword id="KW-0808">Transferase</keyword>
<keyword id="KW-0809">Transit peptide</keyword>
<reference key="1">
    <citation type="journal article" date="1996" name="Plant Mol. Biol.">
        <title>Cloning and analysis of the gene for cystathionine gamma-synthase from Arabidopsis thaliana.</title>
        <authorList>
            <person name="Kim J."/>
            <person name="Leustek T."/>
        </authorList>
    </citation>
    <scope>NUCLEOTIDE SEQUENCE [MRNA]</scope>
    <scope>VARIANTS SER-8; GLY-55; GLY-91 AND ALA-459</scope>
    <source>
        <strain>cv. Landsberg erecta</strain>
    </source>
</reference>
<reference key="2">
    <citation type="journal article" date="1998" name="Biochem. J.">
        <title>Cystathionine gamma-synthase from Arabidopsis thaliana: purification and biochemical characterization of the recombinant enzyme overexpressed in Escherichia coli.</title>
        <authorList>
            <person name="Ravanel S."/>
            <person name="Gakiere B."/>
            <person name="Job D."/>
            <person name="Douce R."/>
        </authorList>
    </citation>
    <scope>NUCLEOTIDE SEQUENCE [MRNA]</scope>
    <scope>PROTEIN SEQUENCE OF 69-76</scope>
    <scope>FUNCTION</scope>
    <scope>CATALYTIC ACTIVITY</scope>
    <scope>COFACTOR</scope>
    <scope>ACTIVITY REGULATION</scope>
    <scope>BIOPHYSICOCHEMICAL PROPERTIES</scope>
</reference>
<reference key="3">
    <citation type="online journal article" date="1999" name="Plant Gene Register">
        <title>Nucleotide sequence polymorphisms in the cystathionine gamma-synthase gene of Arabidopsis thaliana.</title>
        <authorList>
            <person name="Kim J."/>
            <person name="Chiba Y."/>
            <person name="Yamamoto A."/>
            <person name="Naito S."/>
            <person name="Leustek T."/>
        </authorList>
        <locator>PGR99-087</locator>
    </citation>
    <scope>NUCLEOTIDE SEQUENCE [GENOMIC DNA]</scope>
    <scope>VARIANTS SER-8; GLY-55; GLY-91 AND PRO-412</scope>
    <source>
        <strain>cv. Columbia</strain>
        <strain>cv. Landsberg erecta</strain>
    </source>
</reference>
<reference key="4">
    <citation type="submission" date="1995-12" db="EMBL/GenBank/DDBJ databases">
        <authorList>
            <person name="Lessard P."/>
            <person name="Kreis M."/>
            <person name="Thomas M."/>
        </authorList>
    </citation>
    <scope>NUCLEOTIDE SEQUENCE [MRNA]</scope>
    <source>
        <strain>cv. Columbia</strain>
    </source>
</reference>
<reference key="5">
    <citation type="journal article" date="2000" name="Nature">
        <title>Sequence and analysis of chromosome 3 of the plant Arabidopsis thaliana.</title>
        <authorList>
            <person name="Salanoubat M."/>
            <person name="Lemcke K."/>
            <person name="Rieger M."/>
            <person name="Ansorge W."/>
            <person name="Unseld M."/>
            <person name="Fartmann B."/>
            <person name="Valle G."/>
            <person name="Bloecker H."/>
            <person name="Perez-Alonso M."/>
            <person name="Obermaier B."/>
            <person name="Delseny M."/>
            <person name="Boutry M."/>
            <person name="Grivell L.A."/>
            <person name="Mache R."/>
            <person name="Puigdomenech P."/>
            <person name="De Simone V."/>
            <person name="Choisne N."/>
            <person name="Artiguenave F."/>
            <person name="Robert C."/>
            <person name="Brottier P."/>
            <person name="Wincker P."/>
            <person name="Cattolico L."/>
            <person name="Weissenbach J."/>
            <person name="Saurin W."/>
            <person name="Quetier F."/>
            <person name="Schaefer M."/>
            <person name="Mueller-Auer S."/>
            <person name="Gabel C."/>
            <person name="Fuchs M."/>
            <person name="Benes V."/>
            <person name="Wurmbach E."/>
            <person name="Drzonek H."/>
            <person name="Erfle H."/>
            <person name="Jordan N."/>
            <person name="Bangert S."/>
            <person name="Wiedelmann R."/>
            <person name="Kranz H."/>
            <person name="Voss H."/>
            <person name="Holland R."/>
            <person name="Brandt P."/>
            <person name="Nyakatura G."/>
            <person name="Vezzi A."/>
            <person name="D'Angelo M."/>
            <person name="Pallavicini A."/>
            <person name="Toppo S."/>
            <person name="Simionati B."/>
            <person name="Conrad A."/>
            <person name="Hornischer K."/>
            <person name="Kauer G."/>
            <person name="Loehnert T.-H."/>
            <person name="Nordsiek G."/>
            <person name="Reichelt J."/>
            <person name="Scharfe M."/>
            <person name="Schoen O."/>
            <person name="Bargues M."/>
            <person name="Terol J."/>
            <person name="Climent J."/>
            <person name="Navarro P."/>
            <person name="Collado C."/>
            <person name="Perez-Perez A."/>
            <person name="Ottenwaelder B."/>
            <person name="Duchemin D."/>
            <person name="Cooke R."/>
            <person name="Laudie M."/>
            <person name="Berger-Llauro C."/>
            <person name="Purnelle B."/>
            <person name="Masuy D."/>
            <person name="de Haan M."/>
            <person name="Maarse A.C."/>
            <person name="Alcaraz J.-P."/>
            <person name="Cottet A."/>
            <person name="Casacuberta E."/>
            <person name="Monfort A."/>
            <person name="Argiriou A."/>
            <person name="Flores M."/>
            <person name="Liguori R."/>
            <person name="Vitale D."/>
            <person name="Mannhaupt G."/>
            <person name="Haase D."/>
            <person name="Schoof H."/>
            <person name="Rudd S."/>
            <person name="Zaccaria P."/>
            <person name="Mewes H.-W."/>
            <person name="Mayer K.F.X."/>
            <person name="Kaul S."/>
            <person name="Town C.D."/>
            <person name="Koo H.L."/>
            <person name="Tallon L.J."/>
            <person name="Jenkins J."/>
            <person name="Rooney T."/>
            <person name="Rizzo M."/>
            <person name="Walts A."/>
            <person name="Utterback T."/>
            <person name="Fujii C.Y."/>
            <person name="Shea T.P."/>
            <person name="Creasy T.H."/>
            <person name="Haas B."/>
            <person name="Maiti R."/>
            <person name="Wu D."/>
            <person name="Peterson J."/>
            <person name="Van Aken S."/>
            <person name="Pai G."/>
            <person name="Militscher J."/>
            <person name="Sellers P."/>
            <person name="Gill J.E."/>
            <person name="Feldblyum T.V."/>
            <person name="Preuss D."/>
            <person name="Lin X."/>
            <person name="Nierman W.C."/>
            <person name="Salzberg S.L."/>
            <person name="White O."/>
            <person name="Venter J.C."/>
            <person name="Fraser C.M."/>
            <person name="Kaneko T."/>
            <person name="Nakamura Y."/>
            <person name="Sato S."/>
            <person name="Kato T."/>
            <person name="Asamizu E."/>
            <person name="Sasamoto S."/>
            <person name="Kimura T."/>
            <person name="Idesawa K."/>
            <person name="Kawashima K."/>
            <person name="Kishida Y."/>
            <person name="Kiyokawa C."/>
            <person name="Kohara M."/>
            <person name="Matsumoto M."/>
            <person name="Matsuno A."/>
            <person name="Muraki A."/>
            <person name="Nakayama S."/>
            <person name="Nakazaki N."/>
            <person name="Shinpo S."/>
            <person name="Takeuchi C."/>
            <person name="Wada T."/>
            <person name="Watanabe A."/>
            <person name="Yamada M."/>
            <person name="Yasuda M."/>
            <person name="Tabata S."/>
        </authorList>
    </citation>
    <scope>NUCLEOTIDE SEQUENCE [LARGE SCALE GENOMIC DNA]</scope>
    <source>
        <strain>cv. Columbia</strain>
    </source>
</reference>
<reference key="6">
    <citation type="journal article" date="2017" name="Plant J.">
        <title>Araport11: a complete reannotation of the Arabidopsis thaliana reference genome.</title>
        <authorList>
            <person name="Cheng C.Y."/>
            <person name="Krishnakumar V."/>
            <person name="Chan A.P."/>
            <person name="Thibaud-Nissen F."/>
            <person name="Schobel S."/>
            <person name="Town C.D."/>
        </authorList>
    </citation>
    <scope>GENOME REANNOTATION</scope>
    <source>
        <strain>cv. Columbia</strain>
    </source>
</reference>
<reference key="7">
    <citation type="journal article" date="2003" name="Science">
        <title>Empirical analysis of transcriptional activity in the Arabidopsis genome.</title>
        <authorList>
            <person name="Yamada K."/>
            <person name="Lim J."/>
            <person name="Dale J.M."/>
            <person name="Chen H."/>
            <person name="Shinn P."/>
            <person name="Palm C.J."/>
            <person name="Southwick A.M."/>
            <person name="Wu H.C."/>
            <person name="Kim C.J."/>
            <person name="Nguyen M."/>
            <person name="Pham P.K."/>
            <person name="Cheuk R.F."/>
            <person name="Karlin-Newmann G."/>
            <person name="Liu S.X."/>
            <person name="Lam B."/>
            <person name="Sakano H."/>
            <person name="Wu T."/>
            <person name="Yu G."/>
            <person name="Miranda M."/>
            <person name="Quach H.L."/>
            <person name="Tripp M."/>
            <person name="Chang C.H."/>
            <person name="Lee J.M."/>
            <person name="Toriumi M.J."/>
            <person name="Chan M.M."/>
            <person name="Tang C.C."/>
            <person name="Onodera C.S."/>
            <person name="Deng J.M."/>
            <person name="Akiyama K."/>
            <person name="Ansari Y."/>
            <person name="Arakawa T."/>
            <person name="Banh J."/>
            <person name="Banno F."/>
            <person name="Bowser L."/>
            <person name="Brooks S.Y."/>
            <person name="Carninci P."/>
            <person name="Chao Q."/>
            <person name="Choy N."/>
            <person name="Enju A."/>
            <person name="Goldsmith A.D."/>
            <person name="Gurjal M."/>
            <person name="Hansen N.F."/>
            <person name="Hayashizaki Y."/>
            <person name="Johnson-Hopson C."/>
            <person name="Hsuan V.W."/>
            <person name="Iida K."/>
            <person name="Karnes M."/>
            <person name="Khan S."/>
            <person name="Koesema E."/>
            <person name="Ishida J."/>
            <person name="Jiang P.X."/>
            <person name="Jones T."/>
            <person name="Kawai J."/>
            <person name="Kamiya A."/>
            <person name="Meyers C."/>
            <person name="Nakajima M."/>
            <person name="Narusaka M."/>
            <person name="Seki M."/>
            <person name="Sakurai T."/>
            <person name="Satou M."/>
            <person name="Tamse R."/>
            <person name="Vaysberg M."/>
            <person name="Wallender E.K."/>
            <person name="Wong C."/>
            <person name="Yamamura Y."/>
            <person name="Yuan S."/>
            <person name="Shinozaki K."/>
            <person name="Davis R.W."/>
            <person name="Theologis A."/>
            <person name="Ecker J.R."/>
        </authorList>
    </citation>
    <scope>NUCLEOTIDE SEQUENCE [LARGE SCALE MRNA]</scope>
    <source>
        <strain>cv. Columbia</strain>
    </source>
</reference>
<reference key="8">
    <citation type="journal article" date="1994" name="Mol. Gen. Genet.">
        <title>Gene density and organization in a small region of the Arabidopsis thaliana genome.</title>
        <authorList>
            <person name="le Guen L."/>
            <person name="Thomas M."/>
            <person name="Kreis M."/>
        </authorList>
    </citation>
    <scope>NUCLEOTIDE SEQUENCE [GENOMIC DNA] OF 340-563</scope>
    <scope>VARIANT PRO-412</scope>
    <source>
        <strain>cv. Columbia</strain>
    </source>
</reference>
<reference key="9">
    <citation type="journal article" date="1999" name="Science">
        <title>Evidence for autoregulation of cystathionine gamma-synthase mRNA stability in Arabidopsis.</title>
        <authorList>
            <person name="Chiba Y."/>
            <person name="Ishikawa M."/>
            <person name="Kijima F."/>
            <person name="Tyson R.H."/>
            <person name="Kim J."/>
            <person name="Yamamoto A."/>
            <person name="Nambara E."/>
            <person name="Leustek T."/>
            <person name="Wallsgrove R.M."/>
            <person name="Naito S."/>
        </authorList>
    </citation>
    <scope>INDUCTION</scope>
    <scope>MUTAGENESIS OF ARG-77; SER-81 AND GLY-84</scope>
</reference>
<reference key="10">
    <citation type="journal article" date="2002" name="J. Biol. Chem.">
        <title>Identification of a short highly conserved amino acid sequence as the functional region required for posttranscriptional autoregulation of the cystathionine gamma-synthase gene in Arabidopsis.</title>
        <authorList>
            <person name="Ominato K."/>
            <person name="Akita H."/>
            <person name="Suzuki A."/>
            <person name="Kijima F."/>
            <person name="Yoshino T."/>
            <person name="Yoshino M."/>
            <person name="Chiba Y."/>
            <person name="Onouchi H."/>
            <person name="Naito S."/>
        </authorList>
    </citation>
    <scope>MUTAGENESIS OF ARG-78 AND ALA-86</scope>
</reference>
<reference key="11">
    <citation type="journal article" date="2014" name="Plant Cell Physiol.">
        <title>The N-terminal cleavable pre-sequence encoded in the first exon of cystathionine gamma-synthase contains two different functional domains for chloroplast targeting and regulation of gene expression.</title>
        <authorList>
            <person name="Hagiwara-Komoda Y."/>
            <person name="Sugiyama T."/>
            <person name="Yamashita Y."/>
            <person name="Onouchi H."/>
            <person name="Naito S."/>
        </authorList>
    </citation>
    <scope>SUBCELLULAR LOCATION</scope>
</reference>
<feature type="transit peptide" description="Chloroplast" evidence="12">
    <location>
        <begin position="1"/>
        <end position="68"/>
    </location>
</feature>
<feature type="chain" id="PRO_0000033455" description="Cystathionine gamma-synthase 1, chloroplastic">
    <location>
        <begin position="69"/>
        <end position="563"/>
    </location>
</feature>
<feature type="binding site" evidence="1">
    <location>
        <position position="226"/>
    </location>
    <ligand>
        <name>pyridoxal 5'-phosphate</name>
        <dbReference type="ChEBI" id="CHEBI:597326"/>
    </ligand>
</feature>
<feature type="binding site" evidence="1">
    <location>
        <position position="228"/>
    </location>
    <ligand>
        <name>pyridoxal 5'-phosphate</name>
        <dbReference type="ChEBI" id="CHEBI:597326"/>
    </ligand>
</feature>
<feature type="binding site" evidence="1">
    <location>
        <position position="256"/>
    </location>
    <ligand>
        <name>pyridoxal 5'-phosphate</name>
        <dbReference type="ChEBI" id="CHEBI:597326"/>
    </ligand>
</feature>
<feature type="binding site" evidence="1">
    <location>
        <position position="257"/>
    </location>
    <ligand>
        <name>pyridoxal 5'-phosphate</name>
        <dbReference type="ChEBI" id="CHEBI:597326"/>
    </ligand>
</feature>
<feature type="binding site" evidence="1">
    <location>
        <position position="281"/>
    </location>
    <ligand>
        <name>pyridoxal 5'-phosphate</name>
        <dbReference type="ChEBI" id="CHEBI:597326"/>
    </ligand>
</feature>
<feature type="binding site" evidence="1">
    <location>
        <position position="376"/>
    </location>
    <ligand>
        <name>pyridoxal 5'-phosphate</name>
        <dbReference type="ChEBI" id="CHEBI:597326"/>
    </ligand>
</feature>
<feature type="binding site" evidence="1">
    <location>
        <position position="378"/>
    </location>
    <ligand>
        <name>pyridoxal 5'-phosphate</name>
        <dbReference type="ChEBI" id="CHEBI:597326"/>
    </ligand>
</feature>
<feature type="modified residue" description="N6-(pyridoxal phosphate)lysine" evidence="1">
    <location>
        <position position="379"/>
    </location>
</feature>
<feature type="sequence variant" evidence="6 8 9">
    <original>C</original>
    <variation>S</variation>
    <location>
        <position position="8"/>
    </location>
</feature>
<feature type="sequence variant" evidence="6 8 9">
    <original>A</original>
    <variation>G</variation>
    <location>
        <position position="55"/>
    </location>
</feature>
<feature type="sequence variant" evidence="6 8 9">
    <original>A</original>
    <variation>G</variation>
    <location>
        <position position="91"/>
    </location>
</feature>
<feature type="sequence variant" evidence="5 8 9">
    <original>T</original>
    <variation>P</variation>
    <location>
        <position position="412"/>
    </location>
</feature>
<feature type="sequence variant" evidence="6">
    <original>G</original>
    <variation>A</variation>
    <location>
        <position position="459"/>
    </location>
</feature>
<feature type="mutagenesis site" description="In mto1-4; over-accumulation of soluble methionine." evidence="2">
    <original>R</original>
    <variation>H</variation>
    <location>
        <position position="77"/>
    </location>
</feature>
<feature type="mutagenesis site" description="In mto1-7; over-accumulation of soluble methionine." evidence="3">
    <original>R</original>
    <variation>K</variation>
    <location>
        <position position="78"/>
    </location>
</feature>
<feature type="mutagenesis site" description="In mto1-2; over-accumulation of soluble methionine." evidence="2">
    <original>S</original>
    <variation>N</variation>
    <location>
        <position position="81"/>
    </location>
</feature>
<feature type="mutagenesis site" description="In mto1-3 and mto1-5; over-accumulation of soluble methionine." evidence="2">
    <original>G</original>
    <variation>D</variation>
    <location>
        <position position="84"/>
    </location>
</feature>
<feature type="mutagenesis site" description="In mto1-1; over-accumulation of soluble methionine." evidence="2">
    <original>G</original>
    <variation>S</variation>
    <location>
        <position position="84"/>
    </location>
</feature>
<feature type="mutagenesis site" description="In mto1-6; over-accumulation of soluble methionine." evidence="3">
    <original>A</original>
    <variation>V</variation>
    <location>
        <position position="86"/>
    </location>
</feature>
<feature type="sequence conflict" description="In Ref. 4; CAA64383." evidence="11" ref="4">
    <original>P</original>
    <variation>T</variation>
    <location>
        <position position="102"/>
    </location>
</feature>
<feature type="sequence conflict" description="In Ref. 4; CAA64383." evidence="11" ref="4">
    <original>S</original>
    <variation>Q</variation>
    <location>
        <position position="177"/>
    </location>
</feature>
<feature type="sequence conflict" description="In Ref. 7; AAM13883." evidence="11" ref="7">
    <original>E</original>
    <variation>K</variation>
    <location>
        <position position="547"/>
    </location>
</feature>
<comment type="function">
    <text evidence="7">Catalyzes the first committed step of methionine (Met) biosynthesis. Catalyzes the formation of L-cystathionine from homoserine esters and L-cysteine, via a gamma-replacement reaction. Substrate preference for cystathionine synthesis is O-phospho-L-homoserine (OPH) &gt; O(4)-succinyl-L-homoserine (OSH) &gt;&gt; O-acetyl-L-homoserine (OAH). Is able, at extremely low rate, to catalyze a gamma-elimination of OPH in the absence of cysteine to produce inorganic phosphate (Pi), 2-oxobutanoate and ammonia.</text>
</comment>
<comment type="catalytic activity">
    <reaction evidence="7">
        <text>O-phospho-L-homoserine + L-cysteine = L,L-cystathionine + phosphate</text>
        <dbReference type="Rhea" id="RHEA:80891"/>
        <dbReference type="ChEBI" id="CHEBI:35235"/>
        <dbReference type="ChEBI" id="CHEBI:43474"/>
        <dbReference type="ChEBI" id="CHEBI:57590"/>
        <dbReference type="ChEBI" id="CHEBI:58161"/>
        <dbReference type="EC" id="2.5.1.160"/>
    </reaction>
</comment>
<comment type="catalytic activity">
    <reaction evidence="7">
        <text>O-succinyl-L-homoserine + L-cysteine = L,L-cystathionine + succinate + H(+)</text>
        <dbReference type="Rhea" id="RHEA:20397"/>
        <dbReference type="ChEBI" id="CHEBI:15378"/>
        <dbReference type="ChEBI" id="CHEBI:30031"/>
        <dbReference type="ChEBI" id="CHEBI:35235"/>
        <dbReference type="ChEBI" id="CHEBI:57661"/>
        <dbReference type="ChEBI" id="CHEBI:58161"/>
    </reaction>
</comment>
<comment type="cofactor">
    <cofactor evidence="7">
        <name>pyridoxal 5'-phosphate</name>
        <dbReference type="ChEBI" id="CHEBI:597326"/>
    </cofactor>
    <text evidence="7">Binds 1 pyridoxal 5'-phosphate per subunit.</text>
</comment>
<comment type="activity regulation">
    <text evidence="7">Inhibited by propargylglycine.</text>
</comment>
<comment type="biophysicochemical properties">
    <kinetics>
        <KM evidence="7">0.46 mM for L-cysteine</KM>
        <KM evidence="7">2.5 mM for O-phospho-L-homoserine</KM>
        <Vmax evidence="7">33.6 umol/min/mg enzyme with L-cysteine as substrate</Vmax>
        <text evidence="7">kcat is 30 sec(-1) with L-cysteine as substrate.</text>
    </kinetics>
    <phDependence>
        <text evidence="7">Optimum pH is 7.5.</text>
    </phDependence>
</comment>
<comment type="pathway">
    <text evidence="7">Amino-acid biosynthesis; L-methionine biosynthesis via de novo pathway; L-cystathionine from O-succinyl-L-homoserine: step 1/1.</text>
</comment>
<comment type="subcellular location">
    <subcellularLocation>
        <location evidence="4">Plastid</location>
        <location evidence="4">Chloroplast</location>
    </subcellularLocation>
</comment>
<comment type="induction">
    <text evidence="2">Down-regulated by methionine.</text>
</comment>
<comment type="miscellaneous">
    <text evidence="2 3 4 7">A DNA region of the first exon coding for a conserved motif of 11 amino acids in CGS1 (positions 77-87) is required for post-transcriptional autoregulation and acts in cis to down-regulate its own mRNA stability in response to excess methionine. This conserved motif is dispensable for CGS enzymatic activity and only found in plant CGSs (PubMed:10558994, PubMed:12121993). It is unclear whether the transit peptide cleavage site is between Phe-68 and Val-69 (PubMed:9531508) or Ala-90 and Ala-91 (PubMed:25146485).</text>
</comment>
<comment type="similarity">
    <text evidence="11">Belongs to the trans-sulfuration enzymes family.</text>
</comment>
<gene>
    <name evidence="11" type="primary">CGS1</name>
    <name evidence="11" type="synonym">CYS1</name>
    <name evidence="10" type="synonym">MTO1</name>
    <name type="ordered locus">At3g01120</name>
    <name type="ORF">T4P13.19</name>
</gene>
<name>CGS1_ARATH</name>
<proteinExistence type="evidence at protein level"/>
<organism>
    <name type="scientific">Arabidopsis thaliana</name>
    <name type="common">Mouse-ear cress</name>
    <dbReference type="NCBI Taxonomy" id="3702"/>
    <lineage>
        <taxon>Eukaryota</taxon>
        <taxon>Viridiplantae</taxon>
        <taxon>Streptophyta</taxon>
        <taxon>Embryophyta</taxon>
        <taxon>Tracheophyta</taxon>
        <taxon>Spermatophyta</taxon>
        <taxon>Magnoliopsida</taxon>
        <taxon>eudicotyledons</taxon>
        <taxon>Gunneridae</taxon>
        <taxon>Pentapetalae</taxon>
        <taxon>rosids</taxon>
        <taxon>malvids</taxon>
        <taxon>Brassicales</taxon>
        <taxon>Brassicaceae</taxon>
        <taxon>Camelineae</taxon>
        <taxon>Arabidopsis</taxon>
    </lineage>
</organism>
<evidence type="ECO:0000250" key="1">
    <source>
        <dbReference type="UniProtKB" id="Q9ZPL5"/>
    </source>
</evidence>
<evidence type="ECO:0000269" key="2">
    <source>
    </source>
</evidence>
<evidence type="ECO:0000269" key="3">
    <source>
    </source>
</evidence>
<evidence type="ECO:0000269" key="4">
    <source>
    </source>
</evidence>
<evidence type="ECO:0000269" key="5">
    <source>
    </source>
</evidence>
<evidence type="ECO:0000269" key="6">
    <source>
    </source>
</evidence>
<evidence type="ECO:0000269" key="7">
    <source>
    </source>
</evidence>
<evidence type="ECO:0000269" key="8">
    <source ref="3"/>
</evidence>
<evidence type="ECO:0000269" key="9">
    <source ref="4"/>
</evidence>
<evidence type="ECO:0000303" key="10">
    <source>
    </source>
</evidence>
<evidence type="ECO:0000305" key="11"/>
<evidence type="ECO:0000305" key="12">
    <source>
    </source>
</evidence>
<sequence>MAVSSFQCPTIFSSSSISGFQCRSDPDLVGSPVGGSSRRRVHASAGISSSFTGDAGLSSRILRFPPNFVRQLSIKARRNCSNIGVAQIVAAKWSNNPSSALPSAAAAAATSSASAVSSAASAAAASSAAAAPVAAAPPVVLKSVDEEVVVAEEGIREKIGSVQLTDSKHSFLSSDGSLTVHAGERLGRGIVTDAITTPVVNTSAYFFKKTAELIDFKEKRSVSFEYGRYGNPTTVVLEDKISALEGAESTLVMASGMCASTVMLLALVPAGGHIVTTTDCYRKTRIFMENFLPKLGITVTVIDPADIAGLEAAVNEFKVSLFFTESPTNPFLRCVDIELVSKICHKRGTLVCIDGTFATPLNQKALALGADLVVHSATKYIGGHNDVLAGCICGSLKLVSEIRNLHHVLGGTLNPNAAYLIIRGMKTLHLRVQQQNSTAFRMAEILEAHPKVSHVYYPGLPSHPEHELAKRQMTGFGGVVSFEIDGDIETTIKFVDSLKIPYIAPSFGGCESIVDQPAIMSYWDLPQEERLKYGIKDNLVRFSFGVEDFEDVKADILQALEAI</sequence>
<protein>
    <recommendedName>
        <fullName evidence="11">Cystathionine gamma-synthase 1, chloroplastic</fullName>
        <shortName evidence="11">AtCGS1</shortName>
        <ecNumber evidence="7">2.5.1.160</ecNumber>
    </recommendedName>
    <alternativeName>
        <fullName evidence="10">METHIONINE OVERACCUMULATION 1</fullName>
    </alternativeName>
    <alternativeName>
        <fullName>O-succinylhomoserine (thiol)-lyase</fullName>
    </alternativeName>
</protein>
<accession>P55217</accession>
<accession>P92944</accession>
<accession>P93038</accession>
<accession>Q42550</accession>
<dbReference type="EC" id="2.5.1.160" evidence="7"/>
<dbReference type="EMBL" id="U43709">
    <property type="protein sequence ID" value="AAC49574.1"/>
    <property type="molecule type" value="mRNA"/>
</dbReference>
<dbReference type="EMBL" id="U83500">
    <property type="protein sequence ID" value="AAB41235.1"/>
    <property type="molecule type" value="mRNA"/>
</dbReference>
<dbReference type="EMBL" id="AB010888">
    <property type="protein sequence ID" value="BAA24699.1"/>
    <property type="molecule type" value="Genomic_DNA"/>
</dbReference>
<dbReference type="EMBL" id="AF039206">
    <property type="protein sequence ID" value="AAC25687.1"/>
    <property type="molecule type" value="Genomic_DNA"/>
</dbReference>
<dbReference type="EMBL" id="X94756">
    <property type="protein sequence ID" value="CAA64383.1"/>
    <property type="molecule type" value="mRNA"/>
</dbReference>
<dbReference type="EMBL" id="AC008261">
    <property type="protein sequence ID" value="AAF26162.1"/>
    <property type="molecule type" value="Genomic_DNA"/>
</dbReference>
<dbReference type="EMBL" id="CP002686">
    <property type="protein sequence ID" value="AEE73612.1"/>
    <property type="molecule type" value="Genomic_DNA"/>
</dbReference>
<dbReference type="EMBL" id="AY094438">
    <property type="protein sequence ID" value="AAM19810.1"/>
    <property type="molecule type" value="mRNA"/>
</dbReference>
<dbReference type="EMBL" id="AY091062">
    <property type="protein sequence ID" value="AAM13883.1"/>
    <property type="molecule type" value="mRNA"/>
</dbReference>
<dbReference type="EMBL" id="BT002753">
    <property type="protein sequence ID" value="AAO22582.1"/>
    <property type="molecule type" value="mRNA"/>
</dbReference>
<dbReference type="EMBL" id="X79707">
    <property type="protein sequence ID" value="CAA56143.1"/>
    <property type="molecule type" value="Genomic_DNA"/>
</dbReference>
<dbReference type="PIR" id="S51579">
    <property type="entry name" value="S51579"/>
</dbReference>
<dbReference type="PIR" id="S71228">
    <property type="entry name" value="S71228"/>
</dbReference>
<dbReference type="RefSeq" id="NP_186761.1">
    <property type="nucleotide sequence ID" value="NM_110977.3"/>
</dbReference>
<dbReference type="SMR" id="P55217"/>
<dbReference type="BioGRID" id="6625">
    <property type="interactions" value="1"/>
</dbReference>
<dbReference type="FunCoup" id="P55217">
    <property type="interactions" value="475"/>
</dbReference>
<dbReference type="STRING" id="3702.P55217"/>
<dbReference type="PaxDb" id="3702-AT3G01120.1"/>
<dbReference type="ProteomicsDB" id="224398"/>
<dbReference type="EnsemblPlants" id="AT3G01120.1">
    <property type="protein sequence ID" value="AT3G01120.1"/>
    <property type="gene ID" value="AT3G01120"/>
</dbReference>
<dbReference type="GeneID" id="821292"/>
<dbReference type="Gramene" id="AT3G01120.1">
    <property type="protein sequence ID" value="AT3G01120.1"/>
    <property type="gene ID" value="AT3G01120"/>
</dbReference>
<dbReference type="KEGG" id="ath:AT3G01120"/>
<dbReference type="Araport" id="AT3G01120"/>
<dbReference type="TAIR" id="AT3G01120">
    <property type="gene designation" value="MTO1"/>
</dbReference>
<dbReference type="eggNOG" id="KOG0053">
    <property type="taxonomic scope" value="Eukaryota"/>
</dbReference>
<dbReference type="HOGENOM" id="CLU_018986_1_2_1"/>
<dbReference type="InParanoid" id="P55217"/>
<dbReference type="OMA" id="EHTFVDM"/>
<dbReference type="OrthoDB" id="3512640at2759"/>
<dbReference type="PhylomeDB" id="P55217"/>
<dbReference type="BioCyc" id="ARA:AT3G01120-MONOMER"/>
<dbReference type="BioCyc" id="MetaCyc:AT3G01120-MONOMER"/>
<dbReference type="BRENDA" id="2.5.1.48">
    <property type="organism ID" value="399"/>
</dbReference>
<dbReference type="SABIO-RK" id="P55217"/>
<dbReference type="UniPathway" id="UPA00051">
    <property type="reaction ID" value="UER00077"/>
</dbReference>
<dbReference type="PRO" id="PR:P55217"/>
<dbReference type="Proteomes" id="UP000006548">
    <property type="component" value="Chromosome 3"/>
</dbReference>
<dbReference type="ExpressionAtlas" id="P55217">
    <property type="expression patterns" value="baseline and differential"/>
</dbReference>
<dbReference type="GO" id="GO:0009507">
    <property type="term" value="C:chloroplast"/>
    <property type="evidence" value="ECO:0007005"/>
    <property type="project" value="TAIR"/>
</dbReference>
<dbReference type="GO" id="GO:0009570">
    <property type="term" value="C:chloroplast stroma"/>
    <property type="evidence" value="ECO:0007005"/>
    <property type="project" value="TAIR"/>
</dbReference>
<dbReference type="GO" id="GO:0003962">
    <property type="term" value="F:cystathionine gamma-synthase activity"/>
    <property type="evidence" value="ECO:0000314"/>
    <property type="project" value="TAIR"/>
</dbReference>
<dbReference type="GO" id="GO:0030170">
    <property type="term" value="F:pyridoxal phosphate binding"/>
    <property type="evidence" value="ECO:0000314"/>
    <property type="project" value="UniProtKB"/>
</dbReference>
<dbReference type="GO" id="GO:0009086">
    <property type="term" value="P:methionine biosynthetic process"/>
    <property type="evidence" value="ECO:0000315"/>
    <property type="project" value="TAIR"/>
</dbReference>
<dbReference type="GO" id="GO:0001887">
    <property type="term" value="P:selenium compound metabolic process"/>
    <property type="evidence" value="ECO:0000314"/>
    <property type="project" value="TAIR"/>
</dbReference>
<dbReference type="GO" id="GO:0019346">
    <property type="term" value="P:transsulfuration"/>
    <property type="evidence" value="ECO:0007669"/>
    <property type="project" value="InterPro"/>
</dbReference>
<dbReference type="CDD" id="cd00614">
    <property type="entry name" value="CGS_like"/>
    <property type="match status" value="1"/>
</dbReference>
<dbReference type="FunFam" id="3.40.640.10:FF:000046">
    <property type="entry name" value="Cystathionine gamma-lyase"/>
    <property type="match status" value="1"/>
</dbReference>
<dbReference type="FunFam" id="3.90.1150.10:FF:000033">
    <property type="entry name" value="Cystathionine gamma-synthase"/>
    <property type="match status" value="1"/>
</dbReference>
<dbReference type="Gene3D" id="3.90.1150.10">
    <property type="entry name" value="Aspartate Aminotransferase, domain 1"/>
    <property type="match status" value="1"/>
</dbReference>
<dbReference type="Gene3D" id="3.40.640.10">
    <property type="entry name" value="Type I PLP-dependent aspartate aminotransferase-like (Major domain)"/>
    <property type="match status" value="1"/>
</dbReference>
<dbReference type="InterPro" id="IPR044639">
    <property type="entry name" value="CGS1/2"/>
</dbReference>
<dbReference type="InterPro" id="IPR000277">
    <property type="entry name" value="Cys/Met-Metab_PyrdxlP-dep_enz"/>
</dbReference>
<dbReference type="InterPro" id="IPR054542">
    <property type="entry name" value="Cys_met_metab_PP"/>
</dbReference>
<dbReference type="InterPro" id="IPR015424">
    <property type="entry name" value="PyrdxlP-dep_Trfase"/>
</dbReference>
<dbReference type="InterPro" id="IPR015421">
    <property type="entry name" value="PyrdxlP-dep_Trfase_major"/>
</dbReference>
<dbReference type="InterPro" id="IPR015422">
    <property type="entry name" value="PyrdxlP-dep_Trfase_small"/>
</dbReference>
<dbReference type="PANTHER" id="PTHR43379">
    <property type="entry name" value="CYSTATHIONINE GAMMA-SYNTHASE"/>
    <property type="match status" value="1"/>
</dbReference>
<dbReference type="PANTHER" id="PTHR43379:SF1">
    <property type="entry name" value="CYSTATHIONINE GAMMA-SYNTHASE 1, CHLOROPLASTIC-RELATED"/>
    <property type="match status" value="1"/>
</dbReference>
<dbReference type="Pfam" id="PF01053">
    <property type="entry name" value="Cys_Met_Meta_PP"/>
    <property type="match status" value="1"/>
</dbReference>
<dbReference type="SUPFAM" id="SSF53383">
    <property type="entry name" value="PLP-dependent transferases"/>
    <property type="match status" value="1"/>
</dbReference>
<dbReference type="PROSITE" id="PS00868">
    <property type="entry name" value="CYS_MET_METAB_PP"/>
    <property type="match status" value="1"/>
</dbReference>